<gene>
    <name evidence="1" type="primary">deoC</name>
    <name type="ordered locus">aq_148</name>
</gene>
<reference key="1">
    <citation type="journal article" date="1998" name="Nature">
        <title>The complete genome of the hyperthermophilic bacterium Aquifex aeolicus.</title>
        <authorList>
            <person name="Deckert G."/>
            <person name="Warren P.V."/>
            <person name="Gaasterland T."/>
            <person name="Young W.G."/>
            <person name="Lenox A.L."/>
            <person name="Graham D.E."/>
            <person name="Overbeek R."/>
            <person name="Snead M.A."/>
            <person name="Keller M."/>
            <person name="Aujay M."/>
            <person name="Huber R."/>
            <person name="Feldman R.A."/>
            <person name="Short J.M."/>
            <person name="Olsen G.J."/>
            <person name="Swanson R.V."/>
        </authorList>
    </citation>
    <scope>NUCLEOTIDE SEQUENCE [LARGE SCALE GENOMIC DNA]</scope>
    <source>
        <strain>VF5</strain>
    </source>
</reference>
<protein>
    <recommendedName>
        <fullName evidence="1">Deoxyribose-phosphate aldolase</fullName>
        <shortName evidence="1">DERA</shortName>
        <ecNumber evidence="1">4.1.2.4</ecNumber>
    </recommendedName>
    <alternativeName>
        <fullName evidence="1">2-deoxy-D-ribose 5-phosphate aldolase</fullName>
    </alternativeName>
    <alternativeName>
        <fullName evidence="1">Phosphodeoxyriboaldolase</fullName>
        <shortName evidence="1">Deoxyriboaldolase</shortName>
    </alternativeName>
</protein>
<dbReference type="EC" id="4.1.2.4" evidence="1"/>
<dbReference type="EMBL" id="AE000657">
    <property type="protein sequence ID" value="AAC06495.1"/>
    <property type="molecule type" value="Genomic_DNA"/>
</dbReference>
<dbReference type="PIR" id="A70314">
    <property type="entry name" value="A70314"/>
</dbReference>
<dbReference type="RefSeq" id="NP_213100.1">
    <property type="nucleotide sequence ID" value="NC_000918.1"/>
</dbReference>
<dbReference type="RefSeq" id="WP_010880038.1">
    <property type="nucleotide sequence ID" value="NC_000918.1"/>
</dbReference>
<dbReference type="PDB" id="1MZH">
    <property type="method" value="X-ray"/>
    <property type="resolution" value="2.00 A"/>
    <property type="chains" value="A/B=1-219"/>
</dbReference>
<dbReference type="PDBsum" id="1MZH"/>
<dbReference type="SMR" id="O66540"/>
<dbReference type="FunCoup" id="O66540">
    <property type="interactions" value="355"/>
</dbReference>
<dbReference type="STRING" id="224324.aq_148"/>
<dbReference type="EnsemblBacteria" id="AAC06495">
    <property type="protein sequence ID" value="AAC06495"/>
    <property type="gene ID" value="aq_148"/>
</dbReference>
<dbReference type="KEGG" id="aae:aq_148"/>
<dbReference type="PATRIC" id="fig|224324.8.peg.124"/>
<dbReference type="eggNOG" id="COG0274">
    <property type="taxonomic scope" value="Bacteria"/>
</dbReference>
<dbReference type="HOGENOM" id="CLU_053595_0_2_0"/>
<dbReference type="InParanoid" id="O66540"/>
<dbReference type="OrthoDB" id="9778711at2"/>
<dbReference type="UniPathway" id="UPA00002">
    <property type="reaction ID" value="UER00468"/>
</dbReference>
<dbReference type="EvolutionaryTrace" id="O66540"/>
<dbReference type="Proteomes" id="UP000000798">
    <property type="component" value="Chromosome"/>
</dbReference>
<dbReference type="GO" id="GO:0005737">
    <property type="term" value="C:cytoplasm"/>
    <property type="evidence" value="ECO:0007669"/>
    <property type="project" value="UniProtKB-SubCell"/>
</dbReference>
<dbReference type="GO" id="GO:0004139">
    <property type="term" value="F:deoxyribose-phosphate aldolase activity"/>
    <property type="evidence" value="ECO:0000318"/>
    <property type="project" value="GO_Central"/>
</dbReference>
<dbReference type="GO" id="GO:0006018">
    <property type="term" value="P:2-deoxyribose 1-phosphate catabolic process"/>
    <property type="evidence" value="ECO:0007669"/>
    <property type="project" value="UniProtKB-UniRule"/>
</dbReference>
<dbReference type="GO" id="GO:0016052">
    <property type="term" value="P:carbohydrate catabolic process"/>
    <property type="evidence" value="ECO:0000318"/>
    <property type="project" value="GO_Central"/>
</dbReference>
<dbReference type="GO" id="GO:0009264">
    <property type="term" value="P:deoxyribonucleotide catabolic process"/>
    <property type="evidence" value="ECO:0000318"/>
    <property type="project" value="GO_Central"/>
</dbReference>
<dbReference type="CDD" id="cd00959">
    <property type="entry name" value="DeoC"/>
    <property type="match status" value="1"/>
</dbReference>
<dbReference type="FunFam" id="3.20.20.70:FF:000044">
    <property type="entry name" value="Deoxyribose-phosphate aldolase"/>
    <property type="match status" value="1"/>
</dbReference>
<dbReference type="Gene3D" id="3.20.20.70">
    <property type="entry name" value="Aldolase class I"/>
    <property type="match status" value="1"/>
</dbReference>
<dbReference type="HAMAP" id="MF_00114">
    <property type="entry name" value="DeoC_type1"/>
    <property type="match status" value="1"/>
</dbReference>
<dbReference type="InterPro" id="IPR013785">
    <property type="entry name" value="Aldolase_TIM"/>
</dbReference>
<dbReference type="InterPro" id="IPR011343">
    <property type="entry name" value="DeoC"/>
</dbReference>
<dbReference type="InterPro" id="IPR002915">
    <property type="entry name" value="DeoC/FbaB/LacD_aldolase"/>
</dbReference>
<dbReference type="InterPro" id="IPR028581">
    <property type="entry name" value="DeoC_typeI"/>
</dbReference>
<dbReference type="NCBIfam" id="TIGR00126">
    <property type="entry name" value="deoC"/>
    <property type="match status" value="1"/>
</dbReference>
<dbReference type="PANTHER" id="PTHR10889">
    <property type="entry name" value="DEOXYRIBOSE-PHOSPHATE ALDOLASE"/>
    <property type="match status" value="1"/>
</dbReference>
<dbReference type="PANTHER" id="PTHR10889:SF1">
    <property type="entry name" value="DEOXYRIBOSE-PHOSPHATE ALDOLASE"/>
    <property type="match status" value="1"/>
</dbReference>
<dbReference type="Pfam" id="PF01791">
    <property type="entry name" value="DeoC"/>
    <property type="match status" value="1"/>
</dbReference>
<dbReference type="PIRSF" id="PIRSF001357">
    <property type="entry name" value="DeoC"/>
    <property type="match status" value="1"/>
</dbReference>
<dbReference type="SMART" id="SM01133">
    <property type="entry name" value="DeoC"/>
    <property type="match status" value="1"/>
</dbReference>
<dbReference type="SUPFAM" id="SSF51569">
    <property type="entry name" value="Aldolase"/>
    <property type="match status" value="1"/>
</dbReference>
<sequence>MIDVRKYIDNAALKPHLSEKEIEEFVLKSEELGIYAVCVNPYHVKLASSIAKKVKVCCVIGFPLGLNKTSVKVKEAVEAVRDGAQELDIVWNLSAFKSEKYDFVVEELKEIFRETPSAVHKVIVETPYLNEEEIKKAVEICIEAGADFIKTSTGFAPRGTTLEEVRLIKSSAKGRIKVKASGGIRDLETAISMIEAGADRIGTSSGISIAEEFLKRHLI</sequence>
<feature type="chain" id="PRO_0000057220" description="Deoxyribose-phosphate aldolase">
    <location>
        <begin position="1"/>
        <end position="219"/>
    </location>
</feature>
<feature type="active site" description="Proton donor/acceptor" evidence="1">
    <location>
        <position position="88"/>
    </location>
</feature>
<feature type="active site" description="Schiff-base intermediate with acetaldehyde" evidence="1">
    <location>
        <position position="150"/>
    </location>
</feature>
<feature type="active site" description="Proton donor/acceptor" evidence="1">
    <location>
        <position position="179"/>
    </location>
</feature>
<feature type="helix" evidence="3">
    <location>
        <begin position="4"/>
        <end position="7"/>
    </location>
</feature>
<feature type="strand" evidence="3">
    <location>
        <begin position="8"/>
        <end position="12"/>
    </location>
</feature>
<feature type="helix" evidence="3">
    <location>
        <begin position="19"/>
        <end position="31"/>
    </location>
</feature>
<feature type="strand" evidence="3">
    <location>
        <begin position="35"/>
        <end position="39"/>
    </location>
</feature>
<feature type="helix" evidence="3">
    <location>
        <begin position="41"/>
        <end position="43"/>
    </location>
</feature>
<feature type="helix" evidence="3">
    <location>
        <begin position="44"/>
        <end position="50"/>
    </location>
</feature>
<feature type="strand" evidence="3">
    <location>
        <begin position="52"/>
        <end position="61"/>
    </location>
</feature>
<feature type="turn" evidence="3">
    <location>
        <begin position="62"/>
        <end position="64"/>
    </location>
</feature>
<feature type="helix" evidence="3">
    <location>
        <begin position="69"/>
        <end position="81"/>
    </location>
</feature>
<feature type="strand" evidence="3">
    <location>
        <begin position="85"/>
        <end position="90"/>
    </location>
</feature>
<feature type="helix" evidence="3">
    <location>
        <begin position="93"/>
        <end position="97"/>
    </location>
</feature>
<feature type="helix" evidence="3">
    <location>
        <begin position="101"/>
        <end position="113"/>
    </location>
</feature>
<feature type="strand" evidence="3">
    <location>
        <begin position="118"/>
        <end position="123"/>
    </location>
</feature>
<feature type="helix" evidence="3">
    <location>
        <begin position="126"/>
        <end position="128"/>
    </location>
</feature>
<feature type="helix" evidence="3">
    <location>
        <begin position="131"/>
        <end position="144"/>
    </location>
</feature>
<feature type="strand" evidence="3">
    <location>
        <begin position="147"/>
        <end position="150"/>
    </location>
</feature>
<feature type="strand" evidence="3">
    <location>
        <begin position="156"/>
        <end position="158"/>
    </location>
</feature>
<feature type="helix" evidence="3">
    <location>
        <begin position="162"/>
        <end position="172"/>
    </location>
</feature>
<feature type="strand" evidence="3">
    <location>
        <begin position="175"/>
        <end position="183"/>
    </location>
</feature>
<feature type="helix" evidence="3">
    <location>
        <begin position="187"/>
        <end position="195"/>
    </location>
</feature>
<feature type="strand" evidence="3">
    <location>
        <begin position="199"/>
        <end position="204"/>
    </location>
</feature>
<feature type="helix" evidence="3">
    <location>
        <begin position="206"/>
        <end position="219"/>
    </location>
</feature>
<organism>
    <name type="scientific">Aquifex aeolicus (strain VF5)</name>
    <dbReference type="NCBI Taxonomy" id="224324"/>
    <lineage>
        <taxon>Bacteria</taxon>
        <taxon>Pseudomonadati</taxon>
        <taxon>Aquificota</taxon>
        <taxon>Aquificia</taxon>
        <taxon>Aquificales</taxon>
        <taxon>Aquificaceae</taxon>
        <taxon>Aquifex</taxon>
    </lineage>
</organism>
<evidence type="ECO:0000255" key="1">
    <source>
        <dbReference type="HAMAP-Rule" id="MF_00114"/>
    </source>
</evidence>
<evidence type="ECO:0000305" key="2"/>
<evidence type="ECO:0007829" key="3">
    <source>
        <dbReference type="PDB" id="1MZH"/>
    </source>
</evidence>
<accession>O66540</accession>
<comment type="function">
    <text evidence="1">Catalyzes a reversible aldol reaction between acetaldehyde and D-glyceraldehyde 3-phosphate to generate 2-deoxy-D-ribose 5-phosphate.</text>
</comment>
<comment type="catalytic activity">
    <reaction evidence="1">
        <text>2-deoxy-D-ribose 5-phosphate = D-glyceraldehyde 3-phosphate + acetaldehyde</text>
        <dbReference type="Rhea" id="RHEA:12821"/>
        <dbReference type="ChEBI" id="CHEBI:15343"/>
        <dbReference type="ChEBI" id="CHEBI:59776"/>
        <dbReference type="ChEBI" id="CHEBI:62877"/>
        <dbReference type="EC" id="4.1.2.4"/>
    </reaction>
</comment>
<comment type="pathway">
    <text evidence="1">Carbohydrate degradation; 2-deoxy-D-ribose 1-phosphate degradation; D-glyceraldehyde 3-phosphate and acetaldehyde from 2-deoxy-alpha-D-ribose 1-phosphate: step 2/2.</text>
</comment>
<comment type="subcellular location">
    <subcellularLocation>
        <location evidence="1">Cytoplasm</location>
    </subcellularLocation>
</comment>
<comment type="similarity">
    <text evidence="1 2">Belongs to the DeoC/FbaB aldolase family. DeoC type 1 subfamily.</text>
</comment>
<keyword id="KW-0002">3D-structure</keyword>
<keyword id="KW-0963">Cytoplasm</keyword>
<keyword id="KW-0456">Lyase</keyword>
<keyword id="KW-1185">Reference proteome</keyword>
<keyword id="KW-0704">Schiff base</keyword>
<name>DEOC_AQUAE</name>
<proteinExistence type="evidence at protein level"/>